<accession>Q9V9V9</accession>
<reference key="1">
    <citation type="journal article" date="2000" name="Science">
        <title>The genome sequence of Drosophila melanogaster.</title>
        <authorList>
            <person name="Adams M.D."/>
            <person name="Celniker S.E."/>
            <person name="Holt R.A."/>
            <person name="Evans C.A."/>
            <person name="Gocayne J.D."/>
            <person name="Amanatides P.G."/>
            <person name="Scherer S.E."/>
            <person name="Li P.W."/>
            <person name="Hoskins R.A."/>
            <person name="Galle R.F."/>
            <person name="George R.A."/>
            <person name="Lewis S.E."/>
            <person name="Richards S."/>
            <person name="Ashburner M."/>
            <person name="Henderson S.N."/>
            <person name="Sutton G.G."/>
            <person name="Wortman J.R."/>
            <person name="Yandell M.D."/>
            <person name="Zhang Q."/>
            <person name="Chen L.X."/>
            <person name="Brandon R.C."/>
            <person name="Rogers Y.-H.C."/>
            <person name="Blazej R.G."/>
            <person name="Champe M."/>
            <person name="Pfeiffer B.D."/>
            <person name="Wan K.H."/>
            <person name="Doyle C."/>
            <person name="Baxter E.G."/>
            <person name="Helt G."/>
            <person name="Nelson C.R."/>
            <person name="Miklos G.L.G."/>
            <person name="Abril J.F."/>
            <person name="Agbayani A."/>
            <person name="An H.-J."/>
            <person name="Andrews-Pfannkoch C."/>
            <person name="Baldwin D."/>
            <person name="Ballew R.M."/>
            <person name="Basu A."/>
            <person name="Baxendale J."/>
            <person name="Bayraktaroglu L."/>
            <person name="Beasley E.M."/>
            <person name="Beeson K.Y."/>
            <person name="Benos P.V."/>
            <person name="Berman B.P."/>
            <person name="Bhandari D."/>
            <person name="Bolshakov S."/>
            <person name="Borkova D."/>
            <person name="Botchan M.R."/>
            <person name="Bouck J."/>
            <person name="Brokstein P."/>
            <person name="Brottier P."/>
            <person name="Burtis K.C."/>
            <person name="Busam D.A."/>
            <person name="Butler H."/>
            <person name="Cadieu E."/>
            <person name="Center A."/>
            <person name="Chandra I."/>
            <person name="Cherry J.M."/>
            <person name="Cawley S."/>
            <person name="Dahlke C."/>
            <person name="Davenport L.B."/>
            <person name="Davies P."/>
            <person name="de Pablos B."/>
            <person name="Delcher A."/>
            <person name="Deng Z."/>
            <person name="Mays A.D."/>
            <person name="Dew I."/>
            <person name="Dietz S.M."/>
            <person name="Dodson K."/>
            <person name="Doup L.E."/>
            <person name="Downes M."/>
            <person name="Dugan-Rocha S."/>
            <person name="Dunkov B.C."/>
            <person name="Dunn P."/>
            <person name="Durbin K.J."/>
            <person name="Evangelista C.C."/>
            <person name="Ferraz C."/>
            <person name="Ferriera S."/>
            <person name="Fleischmann W."/>
            <person name="Fosler C."/>
            <person name="Gabrielian A.E."/>
            <person name="Garg N.S."/>
            <person name="Gelbart W.M."/>
            <person name="Glasser K."/>
            <person name="Glodek A."/>
            <person name="Gong F."/>
            <person name="Gorrell J.H."/>
            <person name="Gu Z."/>
            <person name="Guan P."/>
            <person name="Harris M."/>
            <person name="Harris N.L."/>
            <person name="Harvey D.A."/>
            <person name="Heiman T.J."/>
            <person name="Hernandez J.R."/>
            <person name="Houck J."/>
            <person name="Hostin D."/>
            <person name="Houston K.A."/>
            <person name="Howland T.J."/>
            <person name="Wei M.-H."/>
            <person name="Ibegwam C."/>
            <person name="Jalali M."/>
            <person name="Kalush F."/>
            <person name="Karpen G.H."/>
            <person name="Ke Z."/>
            <person name="Kennison J.A."/>
            <person name="Ketchum K.A."/>
            <person name="Kimmel B.E."/>
            <person name="Kodira C.D."/>
            <person name="Kraft C.L."/>
            <person name="Kravitz S."/>
            <person name="Kulp D."/>
            <person name="Lai Z."/>
            <person name="Lasko P."/>
            <person name="Lei Y."/>
            <person name="Levitsky A.A."/>
            <person name="Li J.H."/>
            <person name="Li Z."/>
            <person name="Liang Y."/>
            <person name="Lin X."/>
            <person name="Liu X."/>
            <person name="Mattei B."/>
            <person name="McIntosh T.C."/>
            <person name="McLeod M.P."/>
            <person name="McPherson D."/>
            <person name="Merkulov G."/>
            <person name="Milshina N.V."/>
            <person name="Mobarry C."/>
            <person name="Morris J."/>
            <person name="Moshrefi A."/>
            <person name="Mount S.M."/>
            <person name="Moy M."/>
            <person name="Murphy B."/>
            <person name="Murphy L."/>
            <person name="Muzny D.M."/>
            <person name="Nelson D.L."/>
            <person name="Nelson D.R."/>
            <person name="Nelson K.A."/>
            <person name="Nixon K."/>
            <person name="Nusskern D.R."/>
            <person name="Pacleb J.M."/>
            <person name="Palazzolo M."/>
            <person name="Pittman G.S."/>
            <person name="Pan S."/>
            <person name="Pollard J."/>
            <person name="Puri V."/>
            <person name="Reese M.G."/>
            <person name="Reinert K."/>
            <person name="Remington K."/>
            <person name="Saunders R.D.C."/>
            <person name="Scheeler F."/>
            <person name="Shen H."/>
            <person name="Shue B.C."/>
            <person name="Siden-Kiamos I."/>
            <person name="Simpson M."/>
            <person name="Skupski M.P."/>
            <person name="Smith T.J."/>
            <person name="Spier E."/>
            <person name="Spradling A.C."/>
            <person name="Stapleton M."/>
            <person name="Strong R."/>
            <person name="Sun E."/>
            <person name="Svirskas R."/>
            <person name="Tector C."/>
            <person name="Turner R."/>
            <person name="Venter E."/>
            <person name="Wang A.H."/>
            <person name="Wang X."/>
            <person name="Wang Z.-Y."/>
            <person name="Wassarman D.A."/>
            <person name="Weinstock G.M."/>
            <person name="Weissenbach J."/>
            <person name="Williams S.M."/>
            <person name="Woodage T."/>
            <person name="Worley K.C."/>
            <person name="Wu D."/>
            <person name="Yang S."/>
            <person name="Yao Q.A."/>
            <person name="Ye J."/>
            <person name="Yeh R.-F."/>
            <person name="Zaveri J.S."/>
            <person name="Zhan M."/>
            <person name="Zhang G."/>
            <person name="Zhao Q."/>
            <person name="Zheng L."/>
            <person name="Zheng X.H."/>
            <person name="Zhong F.N."/>
            <person name="Zhong W."/>
            <person name="Zhou X."/>
            <person name="Zhu S.C."/>
            <person name="Zhu X."/>
            <person name="Smith H.O."/>
            <person name="Gibbs R.A."/>
            <person name="Myers E.W."/>
            <person name="Rubin G.M."/>
            <person name="Venter J.C."/>
        </authorList>
    </citation>
    <scope>NUCLEOTIDE SEQUENCE [LARGE SCALE GENOMIC DNA]</scope>
    <source>
        <strain>Berkeley</strain>
    </source>
</reference>
<reference key="2">
    <citation type="journal article" date="2002" name="Genome Biol.">
        <title>Annotation of the Drosophila melanogaster euchromatic genome: a systematic review.</title>
        <authorList>
            <person name="Misra S."/>
            <person name="Crosby M.A."/>
            <person name="Mungall C.J."/>
            <person name="Matthews B.B."/>
            <person name="Campbell K.S."/>
            <person name="Hradecky P."/>
            <person name="Huang Y."/>
            <person name="Kaminker J.S."/>
            <person name="Millburn G.H."/>
            <person name="Prochnik S.E."/>
            <person name="Smith C.D."/>
            <person name="Tupy J.L."/>
            <person name="Whitfield E.J."/>
            <person name="Bayraktaroglu L."/>
            <person name="Berman B.P."/>
            <person name="Bettencourt B.R."/>
            <person name="Celniker S.E."/>
            <person name="de Grey A.D.N.J."/>
            <person name="Drysdale R.A."/>
            <person name="Harris N.L."/>
            <person name="Richter J."/>
            <person name="Russo S."/>
            <person name="Schroeder A.J."/>
            <person name="Shu S.Q."/>
            <person name="Stapleton M."/>
            <person name="Yamada C."/>
            <person name="Ashburner M."/>
            <person name="Gelbart W.M."/>
            <person name="Rubin G.M."/>
            <person name="Lewis S.E."/>
        </authorList>
    </citation>
    <scope>GENOME REANNOTATION</scope>
    <source>
        <strain>Berkeley</strain>
    </source>
</reference>
<reference key="3">
    <citation type="submission" date="2006-10" db="EMBL/GenBank/DDBJ databases">
        <authorList>
            <person name="Stapleton M."/>
            <person name="Carlson J.W."/>
            <person name="Frise E."/>
            <person name="Kapadia B."/>
            <person name="Park S."/>
            <person name="Wan K.H."/>
            <person name="Yu C."/>
            <person name="Celniker S.E."/>
        </authorList>
    </citation>
    <scope>NUCLEOTIDE SEQUENCE [LARGE SCALE MRNA]</scope>
    <source>
        <strain>Berkeley</strain>
    </source>
</reference>
<reference key="4">
    <citation type="journal article" date="2021" name="Proc. Natl. Acad. Sci. U.S.A.">
        <title>Novel function of N-acetyltransferase for microtubule stability and JNK signaling in Drosophila organ development.</title>
        <authorList>
            <person name="Mok J.W."/>
            <person name="Choi K.W."/>
        </authorList>
    </citation>
    <scope>FUNCTION</scope>
    <scope>CATALYTIC ACTIVITY</scope>
    <scope>INTERACTION WITH ALPHA- AND BETA-TUBULIN</scope>
    <scope>SUBCELLULAR LOCATION</scope>
    <scope>DEVELOPMENTAL STAGE</scope>
    <scope>DISRUPTION PHENOTYPE</scope>
    <scope>MUTAGENESIS OF 115-ARG--GLY-120</scope>
</reference>
<proteinExistence type="evidence at protein level"/>
<dbReference type="EC" id="2.3.1.308" evidence="2"/>
<dbReference type="EMBL" id="AE014297">
    <property type="protein sequence ID" value="AAF57173.1"/>
    <property type="molecule type" value="Genomic_DNA"/>
</dbReference>
<dbReference type="EMBL" id="BT029052">
    <property type="protein sequence ID" value="ABJ16985.1"/>
    <property type="molecule type" value="mRNA"/>
</dbReference>
<dbReference type="RefSeq" id="NP_001263148.1">
    <property type="nucleotide sequence ID" value="NM_001276219.1"/>
</dbReference>
<dbReference type="RefSeq" id="NP_651877.1">
    <property type="nucleotide sequence ID" value="NM_143620.2"/>
</dbReference>
<dbReference type="SMR" id="Q9V9V9"/>
<dbReference type="BioGRID" id="68569">
    <property type="interactions" value="14"/>
</dbReference>
<dbReference type="FunCoup" id="Q9V9V9">
    <property type="interactions" value="1095"/>
</dbReference>
<dbReference type="IntAct" id="Q9V9V9">
    <property type="interactions" value="2"/>
</dbReference>
<dbReference type="STRING" id="7227.FBpp0307962"/>
<dbReference type="PaxDb" id="7227-FBpp0085227"/>
<dbReference type="DNASU" id="43726"/>
<dbReference type="EnsemblMetazoa" id="FBtr0085868">
    <property type="protein sequence ID" value="FBpp0085227"/>
    <property type="gene ID" value="FBgn0039859"/>
</dbReference>
<dbReference type="EnsemblMetazoa" id="FBtr0337033">
    <property type="protein sequence ID" value="FBpp0307962"/>
    <property type="gene ID" value="FBgn0039859"/>
</dbReference>
<dbReference type="GeneID" id="43726"/>
<dbReference type="KEGG" id="dme:Dmel_CG11539"/>
<dbReference type="UCSC" id="CG11539-RA">
    <property type="organism name" value="d. melanogaster"/>
</dbReference>
<dbReference type="AGR" id="FB:FBgn0039859"/>
<dbReference type="CTD" id="43726"/>
<dbReference type="FlyBase" id="FBgn0039859">
    <property type="gene designation" value="Mnat9"/>
</dbReference>
<dbReference type="VEuPathDB" id="VectorBase:FBgn0039859"/>
<dbReference type="eggNOG" id="KOG4135">
    <property type="taxonomic scope" value="Eukaryota"/>
</dbReference>
<dbReference type="GeneTree" id="ENSGT00390000012745"/>
<dbReference type="HOGENOM" id="CLU_073102_0_0_1"/>
<dbReference type="InParanoid" id="Q9V9V9"/>
<dbReference type="OMA" id="WHVPRYH"/>
<dbReference type="OrthoDB" id="5043642at2759"/>
<dbReference type="PhylomeDB" id="Q9V9V9"/>
<dbReference type="BioGRID-ORCS" id="43726">
    <property type="hits" value="0 hits in 1 CRISPR screen"/>
</dbReference>
<dbReference type="GenomeRNAi" id="43726"/>
<dbReference type="PRO" id="PR:Q9V9V9"/>
<dbReference type="Proteomes" id="UP000000803">
    <property type="component" value="Chromosome 3R"/>
</dbReference>
<dbReference type="Bgee" id="FBgn0039859">
    <property type="expression patterns" value="Expressed in adult anterior midgut class II enteroendocrine cell in adult midgut (Drosophila) and 33 other cell types or tissues"/>
</dbReference>
<dbReference type="ExpressionAtlas" id="Q9V9V9">
    <property type="expression patterns" value="baseline and differential"/>
</dbReference>
<dbReference type="GO" id="GO:0005737">
    <property type="term" value="C:cytoplasm"/>
    <property type="evidence" value="ECO:0007669"/>
    <property type="project" value="UniProtKB-KW"/>
</dbReference>
<dbReference type="GO" id="GO:0005634">
    <property type="term" value="C:nucleus"/>
    <property type="evidence" value="ECO:0007669"/>
    <property type="project" value="UniProtKB-SubCell"/>
</dbReference>
<dbReference type="GO" id="GO:0000922">
    <property type="term" value="C:spindle pole"/>
    <property type="evidence" value="ECO:0007669"/>
    <property type="project" value="UniProtKB-SubCell"/>
</dbReference>
<dbReference type="GO" id="GO:0008017">
    <property type="term" value="F:microtubule binding"/>
    <property type="evidence" value="ECO:0000314"/>
    <property type="project" value="FlyBase"/>
</dbReference>
<dbReference type="GO" id="GO:0120519">
    <property type="term" value="F:tubulin N-terminal-methionine acetyltransferase activity"/>
    <property type="evidence" value="ECO:0000314"/>
    <property type="project" value="FlyBase"/>
</dbReference>
<dbReference type="GO" id="GO:0035331">
    <property type="term" value="P:negative regulation of hippo signaling"/>
    <property type="evidence" value="ECO:0000315"/>
    <property type="project" value="FlyBase"/>
</dbReference>
<dbReference type="GO" id="GO:0046329">
    <property type="term" value="P:negative regulation of JNK cascade"/>
    <property type="evidence" value="ECO:0000315"/>
    <property type="project" value="FlyBase"/>
</dbReference>
<dbReference type="GO" id="GO:0007026">
    <property type="term" value="P:negative regulation of microtubule depolymerization"/>
    <property type="evidence" value="ECO:0000314"/>
    <property type="project" value="FlyBase"/>
</dbReference>
<dbReference type="GO" id="GO:0031116">
    <property type="term" value="P:positive regulation of microtubule polymerization"/>
    <property type="evidence" value="ECO:0000314"/>
    <property type="project" value="FlyBase"/>
</dbReference>
<dbReference type="GO" id="GO:1901673">
    <property type="term" value="P:regulation of mitotic spindle assembly"/>
    <property type="evidence" value="ECO:0000315"/>
    <property type="project" value="FlyBase"/>
</dbReference>
<dbReference type="FunFam" id="3.40.630.30:FF:000132">
    <property type="entry name" value="N-acetyltransferase 9-like protein"/>
    <property type="match status" value="1"/>
</dbReference>
<dbReference type="Gene3D" id="3.40.630.30">
    <property type="match status" value="1"/>
</dbReference>
<dbReference type="InterPro" id="IPR016181">
    <property type="entry name" value="Acyl_CoA_acyltransferase"/>
</dbReference>
<dbReference type="InterPro" id="IPR000182">
    <property type="entry name" value="GNAT_dom"/>
</dbReference>
<dbReference type="InterPro" id="IPR039135">
    <property type="entry name" value="NAT9-like"/>
</dbReference>
<dbReference type="PANTHER" id="PTHR13256:SF16">
    <property type="entry name" value="ALPHA_BETA-TUBULIN-N-ACETYLTRANSFERASE 9"/>
    <property type="match status" value="1"/>
</dbReference>
<dbReference type="PANTHER" id="PTHR13256">
    <property type="entry name" value="N-ACETYLTRANSFERASE 9"/>
    <property type="match status" value="1"/>
</dbReference>
<dbReference type="Pfam" id="PF13302">
    <property type="entry name" value="Acetyltransf_3"/>
    <property type="match status" value="1"/>
</dbReference>
<dbReference type="SUPFAM" id="SSF55729">
    <property type="entry name" value="Acyl-CoA N-acyltransferases (Nat)"/>
    <property type="match status" value="1"/>
</dbReference>
<dbReference type="PROSITE" id="PS51186">
    <property type="entry name" value="GNAT"/>
    <property type="match status" value="1"/>
</dbReference>
<keyword id="KW-0012">Acyltransferase</keyword>
<keyword id="KW-0963">Cytoplasm</keyword>
<keyword id="KW-0206">Cytoskeleton</keyword>
<keyword id="KW-0539">Nucleus</keyword>
<keyword id="KW-1185">Reference proteome</keyword>
<keyword id="KW-0808">Transferase</keyword>
<name>NAT9_DROME</name>
<gene>
    <name evidence="3 6" type="primary">Mnat9</name>
    <name evidence="6" type="ORF">CG11539</name>
</gene>
<comment type="function">
    <text evidence="2">N-acetyltransferase that mediates the acetylation of the N-terminal residues of alpha- and beta-tubulin (PubMed:33479178). Required for microtubule stability and inhibition of JNK signaling to promote cell survival during development, possibly acting independently of its N-acetyltransferase activity (PubMed:33479178). Necessary for the stabilization of spindle microtubules and for mitosis progression (PubMed:33479178). Regulates microtubule stability by inhibiting Spastin-mediated depolymerization and promoting Eb1-mediated polymerization (PubMed:33479178).</text>
</comment>
<comment type="catalytic activity">
    <reaction evidence="2">
        <text>N-terminal L-methionyl-[tubulin] + acetyl-CoA = N-terminal N(alpha)-acetyl-L-methionyl-[tubulin] + CoA + H(+)</text>
        <dbReference type="Rhea" id="RHEA:69607"/>
        <dbReference type="Rhea" id="RHEA-COMP:17729"/>
        <dbReference type="Rhea" id="RHEA-COMP:17730"/>
        <dbReference type="ChEBI" id="CHEBI:15378"/>
        <dbReference type="ChEBI" id="CHEBI:57287"/>
        <dbReference type="ChEBI" id="CHEBI:57288"/>
        <dbReference type="ChEBI" id="CHEBI:64731"/>
        <dbReference type="ChEBI" id="CHEBI:133414"/>
        <dbReference type="EC" id="2.3.1.308"/>
    </reaction>
</comment>
<comment type="subunit">
    <text evidence="2">Interacts with microtubules as well as alpha/beta-tubulin heterodimers.</text>
</comment>
<comment type="subcellular location">
    <subcellularLocation>
        <location evidence="2">Nucleus</location>
    </subcellularLocation>
    <subcellularLocation>
        <location evidence="2">Cytoplasm</location>
        <location evidence="2">Cytoskeleton</location>
        <location evidence="2">Spindle</location>
    </subcellularLocation>
    <subcellularLocation>
        <location evidence="2">Cytoplasm</location>
        <location evidence="2">Cytoskeleton</location>
        <location evidence="2">Spindle pole</location>
    </subcellularLocation>
    <text evidence="2">In syncytial embryos, localization varies during mitosis (PubMed:33479178). During interphase and prophase, detected around the nucleus including surrounding tubulins (PubMed:33479178). During metaphase and anaphase, highly enriched at the spindle poles and around the spindle microtubules (PubMed:33479178). During telophase, detected in the midbody region containing spindle microtubules (PubMed:33479178).</text>
</comment>
<comment type="developmental stage">
    <text evidence="2">Detected in syncytial embryos and larvae (at protein level).</text>
</comment>
<comment type="disruption phenotype">
    <text evidence="2">RNAi-mediated knockdown in the posterior compartment of the wing disk, results in adult wings that are reduced in size, display abnormally thin veins and form blisters in the posterior part of the wing (PubMed:33479178). Defects are mainly due to activation of the JNK signaling pathway leading to increased apoptosis in the developing wing (PubMed:33479178). RNAi-mediated knockdown in the dorsoventral (DV) boundary and anterior-posterior (AP) boundary regions of the wing disk, induces notching along the adult wing margin and a reduction in the AP boundary region between the L3 and L4 veins (PubMed:33479178). RNAi-mediated knockdown in the adult thorax causes defects in the abdominal segments (PubMed:33479178). RNAi-mediated knockdown in the adult eyes induces ectopic tissue growth and reduced eye size (PubMed:33479178). RNAi-mediated knockdown in embryos, results in various abnormal mitotic patterns, such as defective chromosome alignments, short spindles and a loss of chromosomes (PubMed:33479178).</text>
</comment>
<comment type="similarity">
    <text evidence="4">Belongs to the acetyltransferase family. GNAT subfamily.</text>
</comment>
<protein>
    <recommendedName>
        <fullName evidence="5">Alpha/beta-tubulin-N-acetyltransferase 9</fullName>
        <ecNumber evidence="2">2.3.1.308</ecNumber>
    </recommendedName>
    <alternativeName>
        <fullName evidence="6">Microtubule-associated Nat9</fullName>
    </alternativeName>
</protein>
<sequence length="200" mass="23629">MHLNENTKILGHRVILVPYEARHVPKYHEWMSNETLRELTASEELTLEEEHEMQRSWREDSDKLTFIVLDAETYSRDQDEIAAMVGDTNLFLHQDPDSQIPTAEAEIMIAEPYARGKGFGREAMLLMLKYAQSQPQLKLDKFEVKIDMDNAASLHLFKSFMFVETRRVEIFHEVTLERPITPDWINWLDQQVDLRMQCYQ</sequence>
<organism>
    <name type="scientific">Drosophila melanogaster</name>
    <name type="common">Fruit fly</name>
    <dbReference type="NCBI Taxonomy" id="7227"/>
    <lineage>
        <taxon>Eukaryota</taxon>
        <taxon>Metazoa</taxon>
        <taxon>Ecdysozoa</taxon>
        <taxon>Arthropoda</taxon>
        <taxon>Hexapoda</taxon>
        <taxon>Insecta</taxon>
        <taxon>Pterygota</taxon>
        <taxon>Neoptera</taxon>
        <taxon>Endopterygota</taxon>
        <taxon>Diptera</taxon>
        <taxon>Brachycera</taxon>
        <taxon>Muscomorpha</taxon>
        <taxon>Ephydroidea</taxon>
        <taxon>Drosophilidae</taxon>
        <taxon>Drosophila</taxon>
        <taxon>Sophophora</taxon>
    </lineage>
</organism>
<evidence type="ECO:0000255" key="1">
    <source>
        <dbReference type="PROSITE-ProRule" id="PRU00532"/>
    </source>
</evidence>
<evidence type="ECO:0000269" key="2">
    <source>
    </source>
</evidence>
<evidence type="ECO:0000303" key="3">
    <source>
    </source>
</evidence>
<evidence type="ECO:0000305" key="4"/>
<evidence type="ECO:0000305" key="5">
    <source>
    </source>
</evidence>
<evidence type="ECO:0000312" key="6">
    <source>
        <dbReference type="FlyBase" id="FBgn0039859"/>
    </source>
</evidence>
<feature type="chain" id="PRO_0000286876" description="Alpha/beta-tubulin-N-acetyltransferase 9">
    <location>
        <begin position="1"/>
        <end position="200"/>
    </location>
</feature>
<feature type="domain" description="N-acetyltransferase" evidence="1">
    <location>
        <begin position="34"/>
        <end position="181"/>
    </location>
</feature>
<feature type="mutagenesis site" description="In AAA; overexpression results in a weak thorax cleft." evidence="2">
    <original>RGKGFG</original>
    <variation>AGKAFA</variation>
    <location>
        <begin position="115"/>
        <end position="120"/>
    </location>
</feature>
<feature type="mutagenesis site" description="In AcDel; overexpression results in a weak thorax cleft. Microtubule polymerization activity is slightly reduced." evidence="2">
    <location>
        <begin position="115"/>
        <end position="120"/>
    </location>
</feature>